<sequence>MEERMLMFPYILNLLAAMLLGALIGAERQWRQRMAGLRTNALVATGAAVFILSSMTTSPDSPGRIAAQIVSGIGFLGAGVIMREGMNVRGLNTAATLWCSAGIGVLCGLGQFKNALAATIIILCANILLREAAQRINQLPISAEGEKRYILKVTCNKEDESAVRQWLLNIVKEAAICLQGLGSVPAQEQGYKEIRAELVGHADYRKTRELIISRIGDNDNITAIHWSIDSQ</sequence>
<proteinExistence type="evidence at transcript level"/>
<dbReference type="EMBL" id="M57715">
    <property type="protein sequence ID" value="AAA72083.1"/>
    <property type="molecule type" value="Unassigned_DNA"/>
</dbReference>
<dbReference type="EMBL" id="AE006468">
    <property type="protein sequence ID" value="AAL22622.1"/>
    <property type="molecule type" value="Genomic_DNA"/>
</dbReference>
<dbReference type="PIR" id="A39083">
    <property type="entry name" value="A39083"/>
</dbReference>
<dbReference type="RefSeq" id="NP_462663.1">
    <property type="nucleotide sequence ID" value="NC_003197.2"/>
</dbReference>
<dbReference type="RefSeq" id="WP_000392694.1">
    <property type="nucleotide sequence ID" value="NC_003197.2"/>
</dbReference>
<dbReference type="SMR" id="P0CI70"/>
<dbReference type="STRING" id="99287.STM3764"/>
<dbReference type="PaxDb" id="99287-STM3764"/>
<dbReference type="GeneID" id="1255288"/>
<dbReference type="KEGG" id="stm:STM3764"/>
<dbReference type="PATRIC" id="fig|99287.12.peg.3983"/>
<dbReference type="HOGENOM" id="CLU_079292_0_0_6"/>
<dbReference type="OMA" id="HIRFLLM"/>
<dbReference type="PhylomeDB" id="P0CI70"/>
<dbReference type="BioCyc" id="SENT99287:STM3764-MONOMER"/>
<dbReference type="Proteomes" id="UP000001014">
    <property type="component" value="Chromosome"/>
</dbReference>
<dbReference type="GO" id="GO:0005886">
    <property type="term" value="C:plasma membrane"/>
    <property type="evidence" value="ECO:0007669"/>
    <property type="project" value="UniProtKB-SubCell"/>
</dbReference>
<dbReference type="Gene3D" id="3.30.70.260">
    <property type="match status" value="1"/>
</dbReference>
<dbReference type="InterPro" id="IPR048640">
    <property type="entry name" value="MgtC-like_C"/>
</dbReference>
<dbReference type="InterPro" id="IPR003416">
    <property type="entry name" value="MgtC/SapB/SrpB/YhiD_fam"/>
</dbReference>
<dbReference type="InterPro" id="IPR049177">
    <property type="entry name" value="MgtC_SapB_SrpB_YhiD_N"/>
</dbReference>
<dbReference type="NCBIfam" id="NF011912">
    <property type="entry name" value="PRK15385.1"/>
    <property type="match status" value="1"/>
</dbReference>
<dbReference type="PANTHER" id="PTHR33778">
    <property type="entry name" value="PROTEIN MGTC"/>
    <property type="match status" value="1"/>
</dbReference>
<dbReference type="PANTHER" id="PTHR33778:SF3">
    <property type="entry name" value="PROTEIN MGTC"/>
    <property type="match status" value="1"/>
</dbReference>
<dbReference type="Pfam" id="PF02308">
    <property type="entry name" value="MgtC"/>
    <property type="match status" value="1"/>
</dbReference>
<dbReference type="Pfam" id="PF21770">
    <property type="entry name" value="MgtC_SapB_C"/>
    <property type="match status" value="1"/>
</dbReference>
<dbReference type="PRINTS" id="PR01837">
    <property type="entry name" value="MGTCSAPBPROT"/>
</dbReference>
<evidence type="ECO:0000255" key="1"/>
<evidence type="ECO:0000269" key="2">
    <source>
    </source>
</evidence>
<evidence type="ECO:0000269" key="3">
    <source>
    </source>
</evidence>
<evidence type="ECO:0000269" key="4">
    <source>
    </source>
</evidence>
<evidence type="ECO:0000269" key="5">
    <source>
    </source>
</evidence>
<evidence type="ECO:0000305" key="6"/>
<feature type="chain" id="PRO_0000202029" description="Protein MgtC">
    <location>
        <begin position="1"/>
        <end position="231"/>
    </location>
</feature>
<feature type="transmembrane region" description="Helical" evidence="1">
    <location>
        <begin position="5"/>
        <end position="25"/>
    </location>
</feature>
<feature type="transmembrane region" description="Helical" evidence="1">
    <location>
        <begin position="39"/>
        <end position="59"/>
    </location>
</feature>
<feature type="transmembrane region" description="Helical" evidence="1">
    <location>
        <begin position="62"/>
        <end position="82"/>
    </location>
</feature>
<feature type="transmembrane region" description="Helical" evidence="1">
    <location>
        <begin position="103"/>
        <end position="123"/>
    </location>
</feature>
<reference key="1">
    <citation type="journal article" date="1991" name="J. Biol. Chem.">
        <title>The mgtB Mg2+ transport locus of Salmonella typhimurium encodes a P-type ATPase.</title>
        <authorList>
            <person name="Snavely M.D."/>
            <person name="Miller C.G."/>
            <person name="Maguire M.E."/>
        </authorList>
    </citation>
    <scope>NUCLEOTIDE SEQUENCE [GENOMIC DNA]</scope>
    <scope>DISRUPTION PHENOTYPE</scope>
    <scope>PROBABLE OPERON STRUCTURE</scope>
    <source>
        <strain>LT2</strain>
    </source>
</reference>
<reference key="2">
    <citation type="journal article" date="2001" name="Nature">
        <title>Complete genome sequence of Salmonella enterica serovar Typhimurium LT2.</title>
        <authorList>
            <person name="McClelland M."/>
            <person name="Sanderson K.E."/>
            <person name="Spieth J."/>
            <person name="Clifton S.W."/>
            <person name="Latreille P."/>
            <person name="Courtney L."/>
            <person name="Porwollik S."/>
            <person name="Ali J."/>
            <person name="Dante M."/>
            <person name="Du F."/>
            <person name="Hou S."/>
            <person name="Layman D."/>
            <person name="Leonard S."/>
            <person name="Nguyen C."/>
            <person name="Scott K."/>
            <person name="Holmes A."/>
            <person name="Grewal N."/>
            <person name="Mulvaney E."/>
            <person name="Ryan E."/>
            <person name="Sun H."/>
            <person name="Florea L."/>
            <person name="Miller W."/>
            <person name="Stoneking T."/>
            <person name="Nhan M."/>
            <person name="Waterston R."/>
            <person name="Wilson R.K."/>
        </authorList>
    </citation>
    <scope>NUCLEOTIDE SEQUENCE [LARGE SCALE GENOMIC DNA]</scope>
    <source>
        <strain>LT2 / SGSC1412 / ATCC 700720</strain>
    </source>
</reference>
<reference key="3">
    <citation type="journal article" date="1995" name="J. Bacteriol.">
        <title>Magnesium transport in Salmonella typhimurium: mgtA encodes a P-type ATPase and is regulated by Mg2+ in a manner similar to that of the mgtB P-type ATPase.</title>
        <authorList>
            <person name="Tao T."/>
            <person name="Snavely M.D."/>
            <person name="Farr S.G."/>
            <person name="Maguire M.E."/>
        </authorList>
    </citation>
    <scope>INDUCTION</scope>
    <scope>DISRUPTION PHENOTYPE</scope>
    <scope>OPERON STRUCTURE</scope>
    <source>
        <strain>LT2</strain>
    </source>
</reference>
<reference key="4">
    <citation type="journal article" date="1998" name="Infect. Immun.">
        <title>Magnesium and the role of MgtC in growth of Salmonella typhimurium.</title>
        <authorList>
            <person name="Moncrief M.B.C."/>
            <person name="Maguire M.E."/>
        </authorList>
    </citation>
    <scope>FUNCTION</scope>
    <scope>INDUCTION</scope>
    <source>
        <strain>LT2</strain>
    </source>
</reference>
<reference key="5">
    <citation type="journal article" date="2006" name="J. Bacteriol.">
        <title>The MgtC virulence factor of Salmonella enterica serovar Typhimurium activates Na(+),K(+)-ATPase.</title>
        <authorList>
            <person name="Guenzel D."/>
            <person name="Kucharski L.M."/>
            <person name="Kehres D.G."/>
            <person name="Romero M.F."/>
            <person name="Maguire M.E."/>
        </authorList>
    </citation>
    <scope>FUNCTION</scope>
    <source>
        <strain>SL1344</strain>
    </source>
</reference>
<keyword id="KW-0997">Cell inner membrane</keyword>
<keyword id="KW-1003">Cell membrane</keyword>
<keyword id="KW-0472">Membrane</keyword>
<keyword id="KW-1185">Reference proteome</keyword>
<keyword id="KW-0812">Transmembrane</keyword>
<keyword id="KW-1133">Transmembrane helix</keyword>
<keyword id="KW-0843">Virulence</keyword>
<accession>P0CI70</accession>
<accession>P22037</accession>
<name>MGTC_SALTY</name>
<comment type="function">
    <text evidence="2 5">Virulence factor required for growth in low Mg(2+) medium and for intramacrophage survival. May be involved in regulating membrane potential by activating Na(+)/K(+)-ATPase.</text>
</comment>
<comment type="subcellular location">
    <subcellularLocation>
        <location evidence="6">Cell inner membrane</location>
        <topology evidence="6">Multi-pass membrane protein</topology>
    </subcellularLocation>
</comment>
<comment type="induction">
    <text evidence="4 5">Part of the mgtC/mgtB operon. Induced by low extracellular levels of Mg(2+). Transcriptionally regulated by extracellular magnesium via the two-component regulatory system PhoQ/PhoP.</text>
</comment>
<comment type="disruption phenotype">
    <text evidence="3 4">Not required for Mg(2+) influx by MgtB.</text>
</comment>
<comment type="similarity">
    <text evidence="6">Belongs to the MgtC/SapB family.</text>
</comment>
<organism>
    <name type="scientific">Salmonella typhimurium (strain LT2 / SGSC1412 / ATCC 700720)</name>
    <dbReference type="NCBI Taxonomy" id="99287"/>
    <lineage>
        <taxon>Bacteria</taxon>
        <taxon>Pseudomonadati</taxon>
        <taxon>Pseudomonadota</taxon>
        <taxon>Gammaproteobacteria</taxon>
        <taxon>Enterobacterales</taxon>
        <taxon>Enterobacteriaceae</taxon>
        <taxon>Salmonella</taxon>
    </lineage>
</organism>
<gene>
    <name type="primary">mgtC</name>
    <name type="ordered locus">STM3764</name>
</gene>
<protein>
    <recommendedName>
        <fullName>Protein MgtC</fullName>
    </recommendedName>
</protein>